<feature type="chain" id="PRO_0000083679" description="3-isopropylmalate dehydrogenase">
    <location>
        <begin position="1"/>
        <end position="354"/>
    </location>
</feature>
<feature type="binding site" evidence="1">
    <location>
        <begin position="73"/>
        <end position="86"/>
    </location>
    <ligand>
        <name>NAD(+)</name>
        <dbReference type="ChEBI" id="CHEBI:57540"/>
    </ligand>
</feature>
<feature type="binding site" evidence="1">
    <location>
        <position position="93"/>
    </location>
    <ligand>
        <name>substrate</name>
    </ligand>
</feature>
<feature type="binding site" evidence="1">
    <location>
        <position position="103"/>
    </location>
    <ligand>
        <name>substrate</name>
    </ligand>
</feature>
<feature type="binding site" evidence="1">
    <location>
        <position position="131"/>
    </location>
    <ligand>
        <name>substrate</name>
    </ligand>
</feature>
<feature type="binding site" evidence="1">
    <location>
        <position position="221"/>
    </location>
    <ligand>
        <name>Mg(2+)</name>
        <dbReference type="ChEBI" id="CHEBI:18420"/>
    </ligand>
</feature>
<feature type="binding site" evidence="1">
    <location>
        <position position="221"/>
    </location>
    <ligand>
        <name>substrate</name>
    </ligand>
</feature>
<feature type="binding site" evidence="1">
    <location>
        <position position="245"/>
    </location>
    <ligand>
        <name>Mg(2+)</name>
        <dbReference type="ChEBI" id="CHEBI:18420"/>
    </ligand>
</feature>
<feature type="binding site" evidence="1">
    <location>
        <position position="249"/>
    </location>
    <ligand>
        <name>Mg(2+)</name>
        <dbReference type="ChEBI" id="CHEBI:18420"/>
    </ligand>
</feature>
<feature type="binding site" evidence="1">
    <location>
        <begin position="279"/>
        <end position="291"/>
    </location>
    <ligand>
        <name>NAD(+)</name>
        <dbReference type="ChEBI" id="CHEBI:57540"/>
    </ligand>
</feature>
<feature type="site" description="Important for catalysis" evidence="1">
    <location>
        <position position="138"/>
    </location>
</feature>
<feature type="site" description="Important for catalysis" evidence="1">
    <location>
        <position position="189"/>
    </location>
</feature>
<name>LEU3_CHRVO</name>
<proteinExistence type="inferred from homology"/>
<sequence length="354" mass="38544">MKIAILPGDGIGPEIIAQAERVLEVLRRDGLKIETEHAPLGGAAYDQYGVPYPEATQKLAREADAVLLGAVGGPAYDKLDRPLRPERGLLAIRKDLNLFANLRPAILYPELANASTLKPEVVAGLDIMIVRELTGDIYFGQPRGIAVNELGEREAYNTMRYSESEVRRIAHVAFGIAMKRNRKLCSVDKANVLETTEFWKEIMIEVAKEYPQVELSHMYVDNAAMQLVRNPKQFDVMVTGNIFGDILSDEASMLTGSIGMLPSASLDQNNKGLYEPSHGSAPDIAGQNLANPLATILSAAMMLRYSFGQEAAARRVEDAVKKVLAQGYRTADIYEAGCEKVSCSGMGDAVVAAM</sequence>
<comment type="function">
    <text evidence="1">Catalyzes the oxidation of 3-carboxy-2-hydroxy-4-methylpentanoate (3-isopropylmalate) to 3-carboxy-4-methyl-2-oxopentanoate. The product decarboxylates to 4-methyl-2 oxopentanoate.</text>
</comment>
<comment type="catalytic activity">
    <reaction evidence="1">
        <text>(2R,3S)-3-isopropylmalate + NAD(+) = 4-methyl-2-oxopentanoate + CO2 + NADH</text>
        <dbReference type="Rhea" id="RHEA:32271"/>
        <dbReference type="ChEBI" id="CHEBI:16526"/>
        <dbReference type="ChEBI" id="CHEBI:17865"/>
        <dbReference type="ChEBI" id="CHEBI:35121"/>
        <dbReference type="ChEBI" id="CHEBI:57540"/>
        <dbReference type="ChEBI" id="CHEBI:57945"/>
        <dbReference type="EC" id="1.1.1.85"/>
    </reaction>
</comment>
<comment type="cofactor">
    <cofactor evidence="1">
        <name>Mg(2+)</name>
        <dbReference type="ChEBI" id="CHEBI:18420"/>
    </cofactor>
    <cofactor evidence="1">
        <name>Mn(2+)</name>
        <dbReference type="ChEBI" id="CHEBI:29035"/>
    </cofactor>
    <text evidence="1">Binds 1 Mg(2+) or Mn(2+) ion per subunit.</text>
</comment>
<comment type="pathway">
    <text evidence="1">Amino-acid biosynthesis; L-leucine biosynthesis; L-leucine from 3-methyl-2-oxobutanoate: step 3/4.</text>
</comment>
<comment type="subunit">
    <text evidence="1">Homodimer.</text>
</comment>
<comment type="subcellular location">
    <subcellularLocation>
        <location evidence="1">Cytoplasm</location>
    </subcellularLocation>
</comment>
<comment type="similarity">
    <text evidence="1">Belongs to the isocitrate and isopropylmalate dehydrogenases family. LeuB type 1 subfamily.</text>
</comment>
<keyword id="KW-0028">Amino-acid biosynthesis</keyword>
<keyword id="KW-0100">Branched-chain amino acid biosynthesis</keyword>
<keyword id="KW-0963">Cytoplasm</keyword>
<keyword id="KW-0432">Leucine biosynthesis</keyword>
<keyword id="KW-0460">Magnesium</keyword>
<keyword id="KW-0464">Manganese</keyword>
<keyword id="KW-0479">Metal-binding</keyword>
<keyword id="KW-0520">NAD</keyword>
<keyword id="KW-0560">Oxidoreductase</keyword>
<keyword id="KW-1185">Reference proteome</keyword>
<dbReference type="EC" id="1.1.1.85" evidence="1"/>
<dbReference type="EMBL" id="AE016825">
    <property type="protein sequence ID" value="AAQ60446.1"/>
    <property type="molecule type" value="Genomic_DNA"/>
</dbReference>
<dbReference type="RefSeq" id="WP_011136325.1">
    <property type="nucleotide sequence ID" value="NC_005085.1"/>
</dbReference>
<dbReference type="SMR" id="Q7NUC2"/>
<dbReference type="STRING" id="243365.CV_2778"/>
<dbReference type="KEGG" id="cvi:CV_2778"/>
<dbReference type="eggNOG" id="COG0473">
    <property type="taxonomic scope" value="Bacteria"/>
</dbReference>
<dbReference type="HOGENOM" id="CLU_031953_0_3_4"/>
<dbReference type="OrthoDB" id="5289857at2"/>
<dbReference type="UniPathway" id="UPA00048">
    <property type="reaction ID" value="UER00072"/>
</dbReference>
<dbReference type="Proteomes" id="UP000001424">
    <property type="component" value="Chromosome"/>
</dbReference>
<dbReference type="GO" id="GO:0005829">
    <property type="term" value="C:cytosol"/>
    <property type="evidence" value="ECO:0007669"/>
    <property type="project" value="TreeGrafter"/>
</dbReference>
<dbReference type="GO" id="GO:0003862">
    <property type="term" value="F:3-isopropylmalate dehydrogenase activity"/>
    <property type="evidence" value="ECO:0007669"/>
    <property type="project" value="UniProtKB-UniRule"/>
</dbReference>
<dbReference type="GO" id="GO:0000287">
    <property type="term" value="F:magnesium ion binding"/>
    <property type="evidence" value="ECO:0007669"/>
    <property type="project" value="InterPro"/>
</dbReference>
<dbReference type="GO" id="GO:0051287">
    <property type="term" value="F:NAD binding"/>
    <property type="evidence" value="ECO:0007669"/>
    <property type="project" value="InterPro"/>
</dbReference>
<dbReference type="GO" id="GO:0009098">
    <property type="term" value="P:L-leucine biosynthetic process"/>
    <property type="evidence" value="ECO:0007669"/>
    <property type="project" value="UniProtKB-UniRule"/>
</dbReference>
<dbReference type="FunFam" id="3.40.718.10:FF:000004">
    <property type="entry name" value="3-isopropylmalate dehydrogenase"/>
    <property type="match status" value="1"/>
</dbReference>
<dbReference type="Gene3D" id="3.40.718.10">
    <property type="entry name" value="Isopropylmalate Dehydrogenase"/>
    <property type="match status" value="1"/>
</dbReference>
<dbReference type="HAMAP" id="MF_01033">
    <property type="entry name" value="LeuB_type1"/>
    <property type="match status" value="1"/>
</dbReference>
<dbReference type="InterPro" id="IPR019818">
    <property type="entry name" value="IsoCit/isopropylmalate_DH_CS"/>
</dbReference>
<dbReference type="InterPro" id="IPR024084">
    <property type="entry name" value="IsoPropMal-DH-like_dom"/>
</dbReference>
<dbReference type="InterPro" id="IPR004429">
    <property type="entry name" value="Isopropylmalate_DH"/>
</dbReference>
<dbReference type="NCBIfam" id="TIGR00169">
    <property type="entry name" value="leuB"/>
    <property type="match status" value="1"/>
</dbReference>
<dbReference type="PANTHER" id="PTHR42979">
    <property type="entry name" value="3-ISOPROPYLMALATE DEHYDROGENASE"/>
    <property type="match status" value="1"/>
</dbReference>
<dbReference type="PANTHER" id="PTHR42979:SF1">
    <property type="entry name" value="3-ISOPROPYLMALATE DEHYDROGENASE"/>
    <property type="match status" value="1"/>
</dbReference>
<dbReference type="Pfam" id="PF00180">
    <property type="entry name" value="Iso_dh"/>
    <property type="match status" value="1"/>
</dbReference>
<dbReference type="SMART" id="SM01329">
    <property type="entry name" value="Iso_dh"/>
    <property type="match status" value="1"/>
</dbReference>
<dbReference type="SUPFAM" id="SSF53659">
    <property type="entry name" value="Isocitrate/Isopropylmalate dehydrogenase-like"/>
    <property type="match status" value="1"/>
</dbReference>
<dbReference type="PROSITE" id="PS00470">
    <property type="entry name" value="IDH_IMDH"/>
    <property type="match status" value="1"/>
</dbReference>
<gene>
    <name evidence="1" type="primary">leuB</name>
    <name type="ordered locus">CV_2778</name>
</gene>
<organism>
    <name type="scientific">Chromobacterium violaceum (strain ATCC 12472 / DSM 30191 / JCM 1249 / CCUG 213 / NBRC 12614 / NCIMB 9131 / NCTC 9757 / MK)</name>
    <dbReference type="NCBI Taxonomy" id="243365"/>
    <lineage>
        <taxon>Bacteria</taxon>
        <taxon>Pseudomonadati</taxon>
        <taxon>Pseudomonadota</taxon>
        <taxon>Betaproteobacteria</taxon>
        <taxon>Neisseriales</taxon>
        <taxon>Chromobacteriaceae</taxon>
        <taxon>Chromobacterium</taxon>
    </lineage>
</organism>
<reference key="1">
    <citation type="journal article" date="2003" name="Proc. Natl. Acad. Sci. U.S.A.">
        <title>The complete genome sequence of Chromobacterium violaceum reveals remarkable and exploitable bacterial adaptability.</title>
        <authorList>
            <person name="Vasconcelos A.T.R."/>
            <person name="de Almeida D.F."/>
            <person name="Hungria M."/>
            <person name="Guimaraes C.T."/>
            <person name="Antonio R.V."/>
            <person name="Almeida F.C."/>
            <person name="de Almeida L.G.P."/>
            <person name="de Almeida R."/>
            <person name="Alves-Gomes J.A."/>
            <person name="Andrade E.M."/>
            <person name="Araripe J."/>
            <person name="de Araujo M.F.F."/>
            <person name="Astolfi-Filho S."/>
            <person name="Azevedo V."/>
            <person name="Baptista A.J."/>
            <person name="Bataus L.A.M."/>
            <person name="Batista J.S."/>
            <person name="Belo A."/>
            <person name="van den Berg C."/>
            <person name="Bogo M."/>
            <person name="Bonatto S."/>
            <person name="Bordignon J."/>
            <person name="Brigido M.M."/>
            <person name="Brito C.A."/>
            <person name="Brocchi M."/>
            <person name="Burity H.A."/>
            <person name="Camargo A.A."/>
            <person name="Cardoso D.D.P."/>
            <person name="Carneiro N.P."/>
            <person name="Carraro D.M."/>
            <person name="Carvalho C.M.B."/>
            <person name="Cascardo J.C.M."/>
            <person name="Cavada B.S."/>
            <person name="Chueire L.M.O."/>
            <person name="Creczynski-Pasa T.B."/>
            <person name="Cunha-Junior N.C."/>
            <person name="Fagundes N."/>
            <person name="Falcao C.L."/>
            <person name="Fantinatti F."/>
            <person name="Farias I.P."/>
            <person name="Felipe M.S.S."/>
            <person name="Ferrari L.P."/>
            <person name="Ferro J.A."/>
            <person name="Ferro M.I.T."/>
            <person name="Franco G.R."/>
            <person name="Freitas N.S.A."/>
            <person name="Furlan L.R."/>
            <person name="Gazzinelli R.T."/>
            <person name="Gomes E.A."/>
            <person name="Goncalves P.R."/>
            <person name="Grangeiro T.B."/>
            <person name="Grattapaglia D."/>
            <person name="Grisard E.C."/>
            <person name="Hanna E.S."/>
            <person name="Jardim S.N."/>
            <person name="Laurino J."/>
            <person name="Leoi L.C.T."/>
            <person name="Lima L.F.A."/>
            <person name="Loureiro M.F."/>
            <person name="Lyra M.C.C.P."/>
            <person name="Madeira H.M.F."/>
            <person name="Manfio G.P."/>
            <person name="Maranhao A.Q."/>
            <person name="Martins W.S."/>
            <person name="di Mauro S.M.Z."/>
            <person name="de Medeiros S.R.B."/>
            <person name="Meissner R.V."/>
            <person name="Moreira M.A.M."/>
            <person name="Nascimento F.F."/>
            <person name="Nicolas M.F."/>
            <person name="Oliveira J.G."/>
            <person name="Oliveira S.C."/>
            <person name="Paixao R.F.C."/>
            <person name="Parente J.A."/>
            <person name="Pedrosa F.O."/>
            <person name="Pena S.D.J."/>
            <person name="Pereira J.O."/>
            <person name="Pereira M."/>
            <person name="Pinto L.S.R.C."/>
            <person name="Pinto L.S."/>
            <person name="Porto J.I.R."/>
            <person name="Potrich D.P."/>
            <person name="Ramalho-Neto C.E."/>
            <person name="Reis A.M.M."/>
            <person name="Rigo L.U."/>
            <person name="Rondinelli E."/>
            <person name="Santos E.B.P."/>
            <person name="Santos F.R."/>
            <person name="Schneider M.P.C."/>
            <person name="Seuanez H.N."/>
            <person name="Silva A.M.R."/>
            <person name="da Silva A.L.C."/>
            <person name="Silva D.W."/>
            <person name="Silva R."/>
            <person name="Simoes I.C."/>
            <person name="Simon D."/>
            <person name="Soares C.M.A."/>
            <person name="Soares R.B.A."/>
            <person name="Souza E.M."/>
            <person name="Souza K.R.L."/>
            <person name="Souza R.C."/>
            <person name="Steffens M.B.R."/>
            <person name="Steindel M."/>
            <person name="Teixeira S.R."/>
            <person name="Urmenyi T."/>
            <person name="Vettore A."/>
            <person name="Wassem R."/>
            <person name="Zaha A."/>
            <person name="Simpson A.J.G."/>
        </authorList>
    </citation>
    <scope>NUCLEOTIDE SEQUENCE [LARGE SCALE GENOMIC DNA]</scope>
    <source>
        <strain>ATCC 12472 / DSM 30191 / JCM 1249 / CCUG 213 / NBRC 12614 / NCIMB 9131 / NCTC 9757 / MK</strain>
    </source>
</reference>
<evidence type="ECO:0000255" key="1">
    <source>
        <dbReference type="HAMAP-Rule" id="MF_01033"/>
    </source>
</evidence>
<protein>
    <recommendedName>
        <fullName evidence="1">3-isopropylmalate dehydrogenase</fullName>
        <ecNumber evidence="1">1.1.1.85</ecNumber>
    </recommendedName>
    <alternativeName>
        <fullName evidence="1">3-IPM-DH</fullName>
    </alternativeName>
    <alternativeName>
        <fullName evidence="1">Beta-IPM dehydrogenase</fullName>
        <shortName evidence="1">IMDH</shortName>
    </alternativeName>
</protein>
<accession>Q7NUC2</accession>